<organism>
    <name type="scientific">Salmonella arizonae (strain ATCC BAA-731 / CDC346-86 / RSK2980)</name>
    <dbReference type="NCBI Taxonomy" id="41514"/>
    <lineage>
        <taxon>Bacteria</taxon>
        <taxon>Pseudomonadati</taxon>
        <taxon>Pseudomonadota</taxon>
        <taxon>Gammaproteobacteria</taxon>
        <taxon>Enterobacterales</taxon>
        <taxon>Enterobacteriaceae</taxon>
        <taxon>Salmonella</taxon>
    </lineage>
</organism>
<reference key="1">
    <citation type="submission" date="2007-11" db="EMBL/GenBank/DDBJ databases">
        <authorList>
            <consortium name="The Salmonella enterica serovar Arizonae Genome Sequencing Project"/>
            <person name="McClelland M."/>
            <person name="Sanderson E.K."/>
            <person name="Porwollik S."/>
            <person name="Spieth J."/>
            <person name="Clifton W.S."/>
            <person name="Fulton R."/>
            <person name="Chunyan W."/>
            <person name="Wollam A."/>
            <person name="Shah N."/>
            <person name="Pepin K."/>
            <person name="Bhonagiri V."/>
            <person name="Nash W."/>
            <person name="Johnson M."/>
            <person name="Thiruvilangam P."/>
            <person name="Wilson R."/>
        </authorList>
    </citation>
    <scope>NUCLEOTIDE SEQUENCE [LARGE SCALE GENOMIC DNA]</scope>
    <source>
        <strain>ATCC BAA-731 / CDC346-86 / RSK2980</strain>
    </source>
</reference>
<sequence length="231" mass="25461">MKRAVVVFSGGQDSTTCLAQALHQYDEVHCVTFDYGQRHRAEIDVARSLALKLGVRAHKMLDVTLLNELAVSSLTRDSIPVPDYEPNADGIPNTFVPGRNILFLTLAAIYAYQVKAEAVITGVCETDFSGYPDCRDEFVKALNRAVNLGMAKDIRFETPLMWLDKAETWALADYWGKLNLVREETLTCYNGIKGDGCGHCAACNLRANGLNHYLADKAAVVTAMKQKTGLQ</sequence>
<accession>A9MM16</accession>
<keyword id="KW-0067">ATP-binding</keyword>
<keyword id="KW-0436">Ligase</keyword>
<keyword id="KW-0479">Metal-binding</keyword>
<keyword id="KW-0547">Nucleotide-binding</keyword>
<keyword id="KW-0671">Queuosine biosynthesis</keyword>
<keyword id="KW-1185">Reference proteome</keyword>
<keyword id="KW-0862">Zinc</keyword>
<feature type="chain" id="PRO_1000088161" description="7-cyano-7-deazaguanine synthase">
    <location>
        <begin position="1"/>
        <end position="231"/>
    </location>
</feature>
<feature type="binding site" evidence="1">
    <location>
        <begin position="8"/>
        <end position="18"/>
    </location>
    <ligand>
        <name>ATP</name>
        <dbReference type="ChEBI" id="CHEBI:30616"/>
    </ligand>
</feature>
<feature type="binding site" evidence="1">
    <location>
        <position position="188"/>
    </location>
    <ligand>
        <name>Zn(2+)</name>
        <dbReference type="ChEBI" id="CHEBI:29105"/>
    </ligand>
</feature>
<feature type="binding site" evidence="1">
    <location>
        <position position="197"/>
    </location>
    <ligand>
        <name>Zn(2+)</name>
        <dbReference type="ChEBI" id="CHEBI:29105"/>
    </ligand>
</feature>
<feature type="binding site" evidence="1">
    <location>
        <position position="200"/>
    </location>
    <ligand>
        <name>Zn(2+)</name>
        <dbReference type="ChEBI" id="CHEBI:29105"/>
    </ligand>
</feature>
<feature type="binding site" evidence="1">
    <location>
        <position position="203"/>
    </location>
    <ligand>
        <name>Zn(2+)</name>
        <dbReference type="ChEBI" id="CHEBI:29105"/>
    </ligand>
</feature>
<dbReference type="EC" id="6.3.4.20" evidence="1"/>
<dbReference type="EMBL" id="CP000880">
    <property type="protein sequence ID" value="ABX22338.1"/>
    <property type="molecule type" value="Genomic_DNA"/>
</dbReference>
<dbReference type="SMR" id="A9MM16"/>
<dbReference type="STRING" id="41514.SARI_02479"/>
<dbReference type="KEGG" id="ses:SARI_02479"/>
<dbReference type="HOGENOM" id="CLU_081854_0_0_6"/>
<dbReference type="UniPathway" id="UPA00391"/>
<dbReference type="Proteomes" id="UP000002084">
    <property type="component" value="Chromosome"/>
</dbReference>
<dbReference type="GO" id="GO:0005524">
    <property type="term" value="F:ATP binding"/>
    <property type="evidence" value="ECO:0007669"/>
    <property type="project" value="UniProtKB-UniRule"/>
</dbReference>
<dbReference type="GO" id="GO:0016879">
    <property type="term" value="F:ligase activity, forming carbon-nitrogen bonds"/>
    <property type="evidence" value="ECO:0007669"/>
    <property type="project" value="UniProtKB-UniRule"/>
</dbReference>
<dbReference type="GO" id="GO:0008270">
    <property type="term" value="F:zinc ion binding"/>
    <property type="evidence" value="ECO:0007669"/>
    <property type="project" value="UniProtKB-UniRule"/>
</dbReference>
<dbReference type="GO" id="GO:0008616">
    <property type="term" value="P:queuosine biosynthetic process"/>
    <property type="evidence" value="ECO:0007669"/>
    <property type="project" value="UniProtKB-UniRule"/>
</dbReference>
<dbReference type="CDD" id="cd01995">
    <property type="entry name" value="QueC-like"/>
    <property type="match status" value="1"/>
</dbReference>
<dbReference type="FunFam" id="3.40.50.620:FF:000017">
    <property type="entry name" value="7-cyano-7-deazaguanine synthase"/>
    <property type="match status" value="1"/>
</dbReference>
<dbReference type="Gene3D" id="3.40.50.620">
    <property type="entry name" value="HUPs"/>
    <property type="match status" value="1"/>
</dbReference>
<dbReference type="HAMAP" id="MF_01633">
    <property type="entry name" value="QueC"/>
    <property type="match status" value="1"/>
</dbReference>
<dbReference type="InterPro" id="IPR018317">
    <property type="entry name" value="QueC"/>
</dbReference>
<dbReference type="InterPro" id="IPR014729">
    <property type="entry name" value="Rossmann-like_a/b/a_fold"/>
</dbReference>
<dbReference type="NCBIfam" id="TIGR00364">
    <property type="entry name" value="7-cyano-7-deazaguanine synthase QueC"/>
    <property type="match status" value="1"/>
</dbReference>
<dbReference type="NCBIfam" id="NF008317">
    <property type="entry name" value="PRK11106.1"/>
    <property type="match status" value="1"/>
</dbReference>
<dbReference type="PANTHER" id="PTHR42914">
    <property type="entry name" value="7-CYANO-7-DEAZAGUANINE SYNTHASE"/>
    <property type="match status" value="1"/>
</dbReference>
<dbReference type="PANTHER" id="PTHR42914:SF1">
    <property type="entry name" value="7-CYANO-7-DEAZAGUANINE SYNTHASE"/>
    <property type="match status" value="1"/>
</dbReference>
<dbReference type="Pfam" id="PF06508">
    <property type="entry name" value="QueC"/>
    <property type="match status" value="1"/>
</dbReference>
<dbReference type="PIRSF" id="PIRSF006293">
    <property type="entry name" value="ExsB"/>
    <property type="match status" value="1"/>
</dbReference>
<dbReference type="SUPFAM" id="SSF52402">
    <property type="entry name" value="Adenine nucleotide alpha hydrolases-like"/>
    <property type="match status" value="1"/>
</dbReference>
<comment type="function">
    <text evidence="1">Catalyzes the ATP-dependent conversion of 7-carboxy-7-deazaguanine (CDG) to 7-cyano-7-deazaguanine (preQ(0)).</text>
</comment>
<comment type="catalytic activity">
    <reaction evidence="1">
        <text>7-carboxy-7-deazaguanine + NH4(+) + ATP = 7-cyano-7-deazaguanine + ADP + phosphate + H2O + H(+)</text>
        <dbReference type="Rhea" id="RHEA:27982"/>
        <dbReference type="ChEBI" id="CHEBI:15377"/>
        <dbReference type="ChEBI" id="CHEBI:15378"/>
        <dbReference type="ChEBI" id="CHEBI:28938"/>
        <dbReference type="ChEBI" id="CHEBI:30616"/>
        <dbReference type="ChEBI" id="CHEBI:43474"/>
        <dbReference type="ChEBI" id="CHEBI:45075"/>
        <dbReference type="ChEBI" id="CHEBI:61036"/>
        <dbReference type="ChEBI" id="CHEBI:456216"/>
        <dbReference type="EC" id="6.3.4.20"/>
    </reaction>
</comment>
<comment type="cofactor">
    <cofactor evidence="1">
        <name>Zn(2+)</name>
        <dbReference type="ChEBI" id="CHEBI:29105"/>
    </cofactor>
    <text evidence="1">Binds 1 zinc ion per subunit.</text>
</comment>
<comment type="pathway">
    <text evidence="1">Purine metabolism; 7-cyano-7-deazaguanine biosynthesis.</text>
</comment>
<comment type="similarity">
    <text evidence="1">Belongs to the QueC family.</text>
</comment>
<name>QUEC_SALAR</name>
<proteinExistence type="inferred from homology"/>
<protein>
    <recommendedName>
        <fullName evidence="1">7-cyano-7-deazaguanine synthase</fullName>
        <ecNumber evidence="1">6.3.4.20</ecNumber>
    </recommendedName>
    <alternativeName>
        <fullName evidence="1">7-cyano-7-carbaguanine synthase</fullName>
    </alternativeName>
    <alternativeName>
        <fullName evidence="1">PreQ(0) synthase</fullName>
    </alternativeName>
    <alternativeName>
        <fullName evidence="1">Queuosine biosynthesis protein QueC</fullName>
    </alternativeName>
</protein>
<evidence type="ECO:0000255" key="1">
    <source>
        <dbReference type="HAMAP-Rule" id="MF_01633"/>
    </source>
</evidence>
<gene>
    <name evidence="1" type="primary">queC</name>
    <name type="ordered locus">SARI_02479</name>
</gene>